<accession>C4L975</accession>
<feature type="chain" id="PRO_1000215623" description="Serine/threonine transporter SstT">
    <location>
        <begin position="1"/>
        <end position="418"/>
    </location>
</feature>
<feature type="transmembrane region" description="Helical" evidence="1">
    <location>
        <begin position="16"/>
        <end position="36"/>
    </location>
</feature>
<feature type="transmembrane region" description="Helical" evidence="1">
    <location>
        <begin position="45"/>
        <end position="65"/>
    </location>
</feature>
<feature type="transmembrane region" description="Helical" evidence="1">
    <location>
        <begin position="83"/>
        <end position="103"/>
    </location>
</feature>
<feature type="transmembrane region" description="Helical" evidence="1">
    <location>
        <begin position="142"/>
        <end position="162"/>
    </location>
</feature>
<feature type="transmembrane region" description="Helical" evidence="1">
    <location>
        <begin position="192"/>
        <end position="212"/>
    </location>
</feature>
<feature type="transmembrane region" description="Helical" evidence="1">
    <location>
        <begin position="218"/>
        <end position="238"/>
    </location>
</feature>
<feature type="transmembrane region" description="Helical" evidence="1">
    <location>
        <begin position="289"/>
        <end position="309"/>
    </location>
</feature>
<feature type="transmembrane region" description="Helical" evidence="1">
    <location>
        <begin position="317"/>
        <end position="337"/>
    </location>
</feature>
<feature type="transmembrane region" description="Helical" evidence="1">
    <location>
        <begin position="364"/>
        <end position="384"/>
    </location>
</feature>
<organism>
    <name type="scientific">Tolumonas auensis (strain DSM 9187 / NBRC 110442 / TA 4)</name>
    <dbReference type="NCBI Taxonomy" id="595494"/>
    <lineage>
        <taxon>Bacteria</taxon>
        <taxon>Pseudomonadati</taxon>
        <taxon>Pseudomonadota</taxon>
        <taxon>Gammaproteobacteria</taxon>
        <taxon>Aeromonadales</taxon>
        <taxon>Aeromonadaceae</taxon>
        <taxon>Tolumonas</taxon>
    </lineage>
</organism>
<dbReference type="EMBL" id="CP001616">
    <property type="protein sequence ID" value="ACQ91974.1"/>
    <property type="molecule type" value="Genomic_DNA"/>
</dbReference>
<dbReference type="RefSeq" id="WP_012728573.1">
    <property type="nucleotide sequence ID" value="NC_012691.1"/>
</dbReference>
<dbReference type="SMR" id="C4L975"/>
<dbReference type="STRING" id="595494.Tola_0344"/>
<dbReference type="KEGG" id="tau:Tola_0344"/>
<dbReference type="eggNOG" id="COG3633">
    <property type="taxonomic scope" value="Bacteria"/>
</dbReference>
<dbReference type="HOGENOM" id="CLU_044581_0_0_6"/>
<dbReference type="OrthoDB" id="9768885at2"/>
<dbReference type="Proteomes" id="UP000009073">
    <property type="component" value="Chromosome"/>
</dbReference>
<dbReference type="GO" id="GO:0005886">
    <property type="term" value="C:plasma membrane"/>
    <property type="evidence" value="ECO:0007669"/>
    <property type="project" value="UniProtKB-SubCell"/>
</dbReference>
<dbReference type="GO" id="GO:0005295">
    <property type="term" value="F:neutral L-amino acid:sodium symporter activity"/>
    <property type="evidence" value="ECO:0007669"/>
    <property type="project" value="TreeGrafter"/>
</dbReference>
<dbReference type="GO" id="GO:0032329">
    <property type="term" value="P:serine transport"/>
    <property type="evidence" value="ECO:0007669"/>
    <property type="project" value="InterPro"/>
</dbReference>
<dbReference type="GO" id="GO:0015826">
    <property type="term" value="P:threonine transport"/>
    <property type="evidence" value="ECO:0007669"/>
    <property type="project" value="InterPro"/>
</dbReference>
<dbReference type="FunFam" id="1.10.3860.10:FF:000003">
    <property type="entry name" value="Serine/threonine transporter sstT"/>
    <property type="match status" value="1"/>
</dbReference>
<dbReference type="Gene3D" id="1.10.3860.10">
    <property type="entry name" value="Sodium:dicarboxylate symporter"/>
    <property type="match status" value="1"/>
</dbReference>
<dbReference type="HAMAP" id="MF_01582">
    <property type="entry name" value="Ser_Thr_transp_SstT"/>
    <property type="match status" value="1"/>
</dbReference>
<dbReference type="InterPro" id="IPR001991">
    <property type="entry name" value="Na-dicarboxylate_symporter"/>
</dbReference>
<dbReference type="InterPro" id="IPR036458">
    <property type="entry name" value="Na:dicarbo_symporter_sf"/>
</dbReference>
<dbReference type="InterPro" id="IPR023025">
    <property type="entry name" value="Ser_Thr_transp_SstT"/>
</dbReference>
<dbReference type="NCBIfam" id="NF010151">
    <property type="entry name" value="PRK13628.1"/>
    <property type="match status" value="1"/>
</dbReference>
<dbReference type="PANTHER" id="PTHR42865">
    <property type="entry name" value="PROTON/GLUTAMATE-ASPARTATE SYMPORTER"/>
    <property type="match status" value="1"/>
</dbReference>
<dbReference type="PANTHER" id="PTHR42865:SF8">
    <property type="entry name" value="SERINE_THREONINE TRANSPORTER SSTT"/>
    <property type="match status" value="1"/>
</dbReference>
<dbReference type="Pfam" id="PF00375">
    <property type="entry name" value="SDF"/>
    <property type="match status" value="1"/>
</dbReference>
<dbReference type="PRINTS" id="PR00173">
    <property type="entry name" value="EDTRNSPORT"/>
</dbReference>
<dbReference type="SUPFAM" id="SSF118215">
    <property type="entry name" value="Proton glutamate symport protein"/>
    <property type="match status" value="1"/>
</dbReference>
<sequence length="418" mass="43017">MSQTPPSFIRLLNNTSLVSQILIGMIVGILLATLIPSAAQSAGLLGTLFVGALKAVAPVLVLLLVTDSIAGHKQGQKTSIRPLLILYLFGTFCAAVVAVVASFAFPSVLHLSAQNADIVPPGGIAEVLNTLLFNVVANPVKALLEGNYIGILAWAIALGLSLRKASDTTKAVIHDLSHAVSGIVKGVIRCAPLGIMGLVASTFAETGFSALLSYAQLLIVLIGCMLFVAFVVNPLIVFWKIKRNPYPLVLMCLKESGVTAFFTRSSAANIPVNMALCEKLRLPEETYAVSIPLGATINMAGAAITITVLSMAAVNTLGISVDLATAVLLSVVATISACGASGVAGGSLLLIPLACSLFGISNDVAMQVVAVGFIIGVLQDSAETALNSSTDVLFTAAACMAEDGSLSEGNLQEDADIV</sequence>
<protein>
    <recommendedName>
        <fullName evidence="1">Serine/threonine transporter SstT</fullName>
    </recommendedName>
    <alternativeName>
        <fullName evidence="1">Na(+)/serine-threonine symporter</fullName>
    </alternativeName>
</protein>
<evidence type="ECO:0000255" key="1">
    <source>
        <dbReference type="HAMAP-Rule" id="MF_01582"/>
    </source>
</evidence>
<keyword id="KW-0029">Amino-acid transport</keyword>
<keyword id="KW-0997">Cell inner membrane</keyword>
<keyword id="KW-1003">Cell membrane</keyword>
<keyword id="KW-0472">Membrane</keyword>
<keyword id="KW-1185">Reference proteome</keyword>
<keyword id="KW-0769">Symport</keyword>
<keyword id="KW-0812">Transmembrane</keyword>
<keyword id="KW-1133">Transmembrane helix</keyword>
<keyword id="KW-0813">Transport</keyword>
<reference key="1">
    <citation type="submission" date="2009-05" db="EMBL/GenBank/DDBJ databases">
        <title>Complete sequence of Tolumonas auensis DSM 9187.</title>
        <authorList>
            <consortium name="US DOE Joint Genome Institute"/>
            <person name="Lucas S."/>
            <person name="Copeland A."/>
            <person name="Lapidus A."/>
            <person name="Glavina del Rio T."/>
            <person name="Tice H."/>
            <person name="Bruce D."/>
            <person name="Goodwin L."/>
            <person name="Pitluck S."/>
            <person name="Chertkov O."/>
            <person name="Brettin T."/>
            <person name="Detter J.C."/>
            <person name="Han C."/>
            <person name="Larimer F."/>
            <person name="Land M."/>
            <person name="Hauser L."/>
            <person name="Kyrpides N."/>
            <person name="Mikhailova N."/>
            <person name="Spring S."/>
            <person name="Beller H."/>
        </authorList>
    </citation>
    <scope>NUCLEOTIDE SEQUENCE [LARGE SCALE GENOMIC DNA]</scope>
    <source>
        <strain>DSM 9187 / NBRC 110442 / TA 4</strain>
    </source>
</reference>
<gene>
    <name evidence="1" type="primary">sstT</name>
    <name type="ordered locus">Tola_0344</name>
</gene>
<proteinExistence type="inferred from homology"/>
<name>SSTT_TOLAT</name>
<comment type="function">
    <text evidence="1">Involved in the import of serine and threonine into the cell, with the concomitant import of sodium (symport system).</text>
</comment>
<comment type="catalytic activity">
    <reaction evidence="1">
        <text>L-serine(in) + Na(+)(in) = L-serine(out) + Na(+)(out)</text>
        <dbReference type="Rhea" id="RHEA:29575"/>
        <dbReference type="ChEBI" id="CHEBI:29101"/>
        <dbReference type="ChEBI" id="CHEBI:33384"/>
    </reaction>
    <physiologicalReaction direction="right-to-left" evidence="1">
        <dbReference type="Rhea" id="RHEA:29577"/>
    </physiologicalReaction>
</comment>
<comment type="catalytic activity">
    <reaction evidence="1">
        <text>L-threonine(in) + Na(+)(in) = L-threonine(out) + Na(+)(out)</text>
        <dbReference type="Rhea" id="RHEA:69999"/>
        <dbReference type="ChEBI" id="CHEBI:29101"/>
        <dbReference type="ChEBI" id="CHEBI:57926"/>
    </reaction>
    <physiologicalReaction direction="right-to-left" evidence="1">
        <dbReference type="Rhea" id="RHEA:70001"/>
    </physiologicalReaction>
</comment>
<comment type="subcellular location">
    <subcellularLocation>
        <location evidence="1">Cell inner membrane</location>
        <topology evidence="1">Multi-pass membrane protein</topology>
    </subcellularLocation>
</comment>
<comment type="similarity">
    <text evidence="1">Belongs to the dicarboxylate/amino acid:cation symporter (DAACS) (TC 2.A.23) family.</text>
</comment>